<comment type="function">
    <text evidence="1">An essential GTPase which binds GTP, GDP and possibly (p)ppGpp with moderate affinity, with high nucleotide exchange rates and a fairly low GTP hydrolysis rate. Plays a role in control of the cell cycle, stress response, ribosome biogenesis and in those bacteria that undergo differentiation, in morphogenesis control.</text>
</comment>
<comment type="cofactor">
    <cofactor evidence="1">
        <name>Mg(2+)</name>
        <dbReference type="ChEBI" id="CHEBI:18420"/>
    </cofactor>
</comment>
<comment type="subunit">
    <text evidence="1">Monomer.</text>
</comment>
<comment type="subcellular location">
    <subcellularLocation>
        <location evidence="1">Cytoplasm</location>
    </subcellularLocation>
</comment>
<comment type="similarity">
    <text evidence="1">Belongs to the TRAFAC class OBG-HflX-like GTPase superfamily. OBG GTPase family.</text>
</comment>
<accession>A8FJQ1</accession>
<keyword id="KW-0963">Cytoplasm</keyword>
<keyword id="KW-0342">GTP-binding</keyword>
<keyword id="KW-0378">Hydrolase</keyword>
<keyword id="KW-0460">Magnesium</keyword>
<keyword id="KW-0479">Metal-binding</keyword>
<keyword id="KW-0547">Nucleotide-binding</keyword>
<protein>
    <recommendedName>
        <fullName evidence="1">GTPase Obg</fullName>
        <ecNumber evidence="1">3.6.5.-</ecNumber>
    </recommendedName>
    <alternativeName>
        <fullName evidence="1">GTP-binding protein Obg</fullName>
    </alternativeName>
</protein>
<reference key="1">
    <citation type="journal article" date="2007" name="J. Bacteriol.">
        <title>The complete genome sequence of Campylobacter jejuni strain 81116 (NCTC11828).</title>
        <authorList>
            <person name="Pearson B.M."/>
            <person name="Gaskin D.J.H."/>
            <person name="Segers R.P.A.M."/>
            <person name="Wells J.M."/>
            <person name="Nuijten P.J.M."/>
            <person name="van Vliet A.H.M."/>
        </authorList>
    </citation>
    <scope>NUCLEOTIDE SEQUENCE [LARGE SCALE GENOMIC DNA]</scope>
    <source>
        <strain>81116 / NCTC 11828</strain>
    </source>
</reference>
<feature type="chain" id="PRO_0000385806" description="GTPase Obg">
    <location>
        <begin position="1"/>
        <end position="345"/>
    </location>
</feature>
<feature type="domain" description="Obg" evidence="2">
    <location>
        <begin position="1"/>
        <end position="158"/>
    </location>
</feature>
<feature type="domain" description="OBG-type G" evidence="1">
    <location>
        <begin position="159"/>
        <end position="339"/>
    </location>
</feature>
<feature type="binding site" evidence="1">
    <location>
        <begin position="165"/>
        <end position="172"/>
    </location>
    <ligand>
        <name>GTP</name>
        <dbReference type="ChEBI" id="CHEBI:37565"/>
    </ligand>
</feature>
<feature type="binding site" evidence="1">
    <location>
        <position position="172"/>
    </location>
    <ligand>
        <name>Mg(2+)</name>
        <dbReference type="ChEBI" id="CHEBI:18420"/>
    </ligand>
</feature>
<feature type="binding site" evidence="1">
    <location>
        <begin position="190"/>
        <end position="194"/>
    </location>
    <ligand>
        <name>GTP</name>
        <dbReference type="ChEBI" id="CHEBI:37565"/>
    </ligand>
</feature>
<feature type="binding site" evidence="1">
    <location>
        <position position="192"/>
    </location>
    <ligand>
        <name>Mg(2+)</name>
        <dbReference type="ChEBI" id="CHEBI:18420"/>
    </ligand>
</feature>
<feature type="binding site" evidence="1">
    <location>
        <begin position="212"/>
        <end position="215"/>
    </location>
    <ligand>
        <name>GTP</name>
        <dbReference type="ChEBI" id="CHEBI:37565"/>
    </ligand>
</feature>
<feature type="binding site" evidence="1">
    <location>
        <begin position="280"/>
        <end position="283"/>
    </location>
    <ligand>
        <name>GTP</name>
        <dbReference type="ChEBI" id="CHEBI:37565"/>
    </ligand>
</feature>
<feature type="binding site" evidence="1">
    <location>
        <begin position="320"/>
        <end position="322"/>
    </location>
    <ligand>
        <name>GTP</name>
        <dbReference type="ChEBI" id="CHEBI:37565"/>
    </ligand>
</feature>
<dbReference type="EC" id="3.6.5.-" evidence="1"/>
<dbReference type="EMBL" id="CP000814">
    <property type="protein sequence ID" value="ABV51688.1"/>
    <property type="molecule type" value="Genomic_DNA"/>
</dbReference>
<dbReference type="SMR" id="A8FJQ1"/>
<dbReference type="KEGG" id="cju:C8J_0089"/>
<dbReference type="HOGENOM" id="CLU_011747_2_0_7"/>
<dbReference type="GO" id="GO:0005737">
    <property type="term" value="C:cytoplasm"/>
    <property type="evidence" value="ECO:0007669"/>
    <property type="project" value="UniProtKB-SubCell"/>
</dbReference>
<dbReference type="GO" id="GO:0005525">
    <property type="term" value="F:GTP binding"/>
    <property type="evidence" value="ECO:0007669"/>
    <property type="project" value="UniProtKB-UniRule"/>
</dbReference>
<dbReference type="GO" id="GO:0003924">
    <property type="term" value="F:GTPase activity"/>
    <property type="evidence" value="ECO:0007669"/>
    <property type="project" value="UniProtKB-UniRule"/>
</dbReference>
<dbReference type="GO" id="GO:0000287">
    <property type="term" value="F:magnesium ion binding"/>
    <property type="evidence" value="ECO:0007669"/>
    <property type="project" value="InterPro"/>
</dbReference>
<dbReference type="GO" id="GO:0042254">
    <property type="term" value="P:ribosome biogenesis"/>
    <property type="evidence" value="ECO:0007669"/>
    <property type="project" value="UniProtKB-UniRule"/>
</dbReference>
<dbReference type="CDD" id="cd01898">
    <property type="entry name" value="Obg"/>
    <property type="match status" value="1"/>
</dbReference>
<dbReference type="FunFam" id="2.70.210.12:FF:000001">
    <property type="entry name" value="GTPase Obg"/>
    <property type="match status" value="1"/>
</dbReference>
<dbReference type="Gene3D" id="2.70.210.12">
    <property type="entry name" value="GTP1/OBG domain"/>
    <property type="match status" value="1"/>
</dbReference>
<dbReference type="Gene3D" id="3.40.50.300">
    <property type="entry name" value="P-loop containing nucleotide triphosphate hydrolases"/>
    <property type="match status" value="1"/>
</dbReference>
<dbReference type="HAMAP" id="MF_01454">
    <property type="entry name" value="GTPase_Obg"/>
    <property type="match status" value="1"/>
</dbReference>
<dbReference type="InterPro" id="IPR031167">
    <property type="entry name" value="G_OBG"/>
</dbReference>
<dbReference type="InterPro" id="IPR006073">
    <property type="entry name" value="GTP-bd"/>
</dbReference>
<dbReference type="InterPro" id="IPR014100">
    <property type="entry name" value="GTP-bd_Obg/CgtA"/>
</dbReference>
<dbReference type="InterPro" id="IPR006074">
    <property type="entry name" value="GTP1-OBG_CS"/>
</dbReference>
<dbReference type="InterPro" id="IPR006169">
    <property type="entry name" value="GTP1_OBG_dom"/>
</dbReference>
<dbReference type="InterPro" id="IPR036726">
    <property type="entry name" value="GTP1_OBG_dom_sf"/>
</dbReference>
<dbReference type="InterPro" id="IPR045086">
    <property type="entry name" value="OBG_GTPase"/>
</dbReference>
<dbReference type="InterPro" id="IPR027417">
    <property type="entry name" value="P-loop_NTPase"/>
</dbReference>
<dbReference type="NCBIfam" id="TIGR02729">
    <property type="entry name" value="Obg_CgtA"/>
    <property type="match status" value="1"/>
</dbReference>
<dbReference type="NCBIfam" id="NF008955">
    <property type="entry name" value="PRK12297.1"/>
    <property type="match status" value="1"/>
</dbReference>
<dbReference type="NCBIfam" id="NF008956">
    <property type="entry name" value="PRK12299.1"/>
    <property type="match status" value="1"/>
</dbReference>
<dbReference type="PANTHER" id="PTHR11702">
    <property type="entry name" value="DEVELOPMENTALLY REGULATED GTP-BINDING PROTEIN-RELATED"/>
    <property type="match status" value="1"/>
</dbReference>
<dbReference type="PANTHER" id="PTHR11702:SF31">
    <property type="entry name" value="MITOCHONDRIAL RIBOSOME-ASSOCIATED GTPASE 2"/>
    <property type="match status" value="1"/>
</dbReference>
<dbReference type="Pfam" id="PF01018">
    <property type="entry name" value="GTP1_OBG"/>
    <property type="match status" value="1"/>
</dbReference>
<dbReference type="Pfam" id="PF01926">
    <property type="entry name" value="MMR_HSR1"/>
    <property type="match status" value="1"/>
</dbReference>
<dbReference type="PIRSF" id="PIRSF002401">
    <property type="entry name" value="GTP_bd_Obg/CgtA"/>
    <property type="match status" value="1"/>
</dbReference>
<dbReference type="PRINTS" id="PR00326">
    <property type="entry name" value="GTP1OBG"/>
</dbReference>
<dbReference type="SUPFAM" id="SSF82051">
    <property type="entry name" value="Obg GTP-binding protein N-terminal domain"/>
    <property type="match status" value="1"/>
</dbReference>
<dbReference type="SUPFAM" id="SSF52540">
    <property type="entry name" value="P-loop containing nucleoside triphosphate hydrolases"/>
    <property type="match status" value="1"/>
</dbReference>
<dbReference type="PROSITE" id="PS51710">
    <property type="entry name" value="G_OBG"/>
    <property type="match status" value="1"/>
</dbReference>
<dbReference type="PROSITE" id="PS00905">
    <property type="entry name" value="GTP1_OBG"/>
    <property type="match status" value="1"/>
</dbReference>
<dbReference type="PROSITE" id="PS51883">
    <property type="entry name" value="OBG"/>
    <property type="match status" value="1"/>
</dbReference>
<sequence length="345" mass="37817">MFIDSVKITLASGDGGKGAVSFRREKHVPLGGPDGGDGGNGGDIIFVCDNNTHTLVNFKGKRELRAQNGAGGMGRNKNGKKGENLELIVPEGTQVIDAQTNEILLDLTKEGQRELFLKGGKGGLGNTHFKHATNQRPDYAQPGIKGESRLVRLELKLIADVGLVGFPNVGKSTLISVVSNAKPEIANYEFTTLTPKLGLVDVDEYNSFVMADIPGIIEGASGGKGLGLAFLKHIERTSFLLFVLDPMRQMPLKEQFIVLRKELEKFSNELFGRKFGIMISKSDSVNLGEEFAEQITLNINELENYLKEINNPQSFLIKVSSLEKTGLKELKFMLLEEIKTLRNNK</sequence>
<organism>
    <name type="scientific">Campylobacter jejuni subsp. jejuni serotype O:6 (strain 81116 / NCTC 11828)</name>
    <dbReference type="NCBI Taxonomy" id="407148"/>
    <lineage>
        <taxon>Bacteria</taxon>
        <taxon>Pseudomonadati</taxon>
        <taxon>Campylobacterota</taxon>
        <taxon>Epsilonproteobacteria</taxon>
        <taxon>Campylobacterales</taxon>
        <taxon>Campylobacteraceae</taxon>
        <taxon>Campylobacter</taxon>
    </lineage>
</organism>
<name>OBG_CAMJ8</name>
<gene>
    <name evidence="1" type="primary">obg</name>
    <name type="ordered locus">C8J_0089</name>
</gene>
<proteinExistence type="inferred from homology"/>
<evidence type="ECO:0000255" key="1">
    <source>
        <dbReference type="HAMAP-Rule" id="MF_01454"/>
    </source>
</evidence>
<evidence type="ECO:0000255" key="2">
    <source>
        <dbReference type="PROSITE-ProRule" id="PRU01231"/>
    </source>
</evidence>